<dbReference type="EC" id="6.3.2.-" evidence="1"/>
<dbReference type="EMBL" id="CP000948">
    <property type="protein sequence ID" value="ACB05146.1"/>
    <property type="molecule type" value="Genomic_DNA"/>
</dbReference>
<dbReference type="RefSeq" id="WP_000004771.1">
    <property type="nucleotide sequence ID" value="NC_010473.1"/>
</dbReference>
<dbReference type="SMR" id="B1XDQ9"/>
<dbReference type="GeneID" id="93777667"/>
<dbReference type="KEGG" id="ecd:ECDH10B_4350"/>
<dbReference type="HOGENOM" id="CLU_008255_1_1_6"/>
<dbReference type="GO" id="GO:0005829">
    <property type="term" value="C:cytosol"/>
    <property type="evidence" value="ECO:0007669"/>
    <property type="project" value="TreeGrafter"/>
</dbReference>
<dbReference type="GO" id="GO:0016880">
    <property type="term" value="F:acid-ammonia (or amide) ligase activity"/>
    <property type="evidence" value="ECO:0007669"/>
    <property type="project" value="UniProtKB-UniRule"/>
</dbReference>
<dbReference type="GO" id="GO:0005524">
    <property type="term" value="F:ATP binding"/>
    <property type="evidence" value="ECO:0007669"/>
    <property type="project" value="UniProtKB-UniRule"/>
</dbReference>
<dbReference type="GO" id="GO:0004824">
    <property type="term" value="F:lysine-tRNA ligase activity"/>
    <property type="evidence" value="ECO:0007669"/>
    <property type="project" value="InterPro"/>
</dbReference>
<dbReference type="GO" id="GO:0000049">
    <property type="term" value="F:tRNA binding"/>
    <property type="evidence" value="ECO:0007669"/>
    <property type="project" value="TreeGrafter"/>
</dbReference>
<dbReference type="GO" id="GO:0006430">
    <property type="term" value="P:lysyl-tRNA aminoacylation"/>
    <property type="evidence" value="ECO:0007669"/>
    <property type="project" value="InterPro"/>
</dbReference>
<dbReference type="FunFam" id="3.30.930.10:FF:000017">
    <property type="entry name" value="Elongation factor P--(R)-beta-lysine ligase"/>
    <property type="match status" value="1"/>
</dbReference>
<dbReference type="Gene3D" id="3.30.930.10">
    <property type="entry name" value="Bira Bifunctional Protein, Domain 2"/>
    <property type="match status" value="1"/>
</dbReference>
<dbReference type="HAMAP" id="MF_00174">
    <property type="entry name" value="EF_P_modif_A"/>
    <property type="match status" value="1"/>
</dbReference>
<dbReference type="InterPro" id="IPR004364">
    <property type="entry name" value="Aa-tRNA-synt_II"/>
</dbReference>
<dbReference type="InterPro" id="IPR006195">
    <property type="entry name" value="aa-tRNA-synth_II"/>
</dbReference>
<dbReference type="InterPro" id="IPR045864">
    <property type="entry name" value="aa-tRNA-synth_II/BPL/LPL"/>
</dbReference>
<dbReference type="InterPro" id="IPR004525">
    <property type="entry name" value="EpmA"/>
</dbReference>
<dbReference type="InterPro" id="IPR018149">
    <property type="entry name" value="Lys-tRNA-synth_II_C"/>
</dbReference>
<dbReference type="NCBIfam" id="TIGR00462">
    <property type="entry name" value="genX"/>
    <property type="match status" value="1"/>
</dbReference>
<dbReference type="NCBIfam" id="NF006828">
    <property type="entry name" value="PRK09350.1"/>
    <property type="match status" value="1"/>
</dbReference>
<dbReference type="PANTHER" id="PTHR42918:SF6">
    <property type="entry name" value="ELONGATION FACTOR P--(R)-BETA-LYSINE LIGASE"/>
    <property type="match status" value="1"/>
</dbReference>
<dbReference type="PANTHER" id="PTHR42918">
    <property type="entry name" value="LYSYL-TRNA SYNTHETASE"/>
    <property type="match status" value="1"/>
</dbReference>
<dbReference type="Pfam" id="PF00152">
    <property type="entry name" value="tRNA-synt_2"/>
    <property type="match status" value="1"/>
</dbReference>
<dbReference type="PRINTS" id="PR00982">
    <property type="entry name" value="TRNASYNTHLYS"/>
</dbReference>
<dbReference type="SUPFAM" id="SSF55681">
    <property type="entry name" value="Class II aaRS and biotin synthetases"/>
    <property type="match status" value="1"/>
</dbReference>
<dbReference type="PROSITE" id="PS50862">
    <property type="entry name" value="AA_TRNA_LIGASE_II"/>
    <property type="match status" value="1"/>
</dbReference>
<gene>
    <name evidence="1" type="primary">epmA</name>
    <name type="synonym">yjeA</name>
    <name type="ordered locus">ECDH10B_4350</name>
</gene>
<comment type="function">
    <text evidence="1">With EpmB is involved in the beta-lysylation step of the post-translational modification of translation elongation factor P (EF-P) on 'Lys-34'. Catalyzes the ATP-dependent activation of (R)-beta-lysine produced by EpmB, forming a lysyl-adenylate, from which the beta-lysyl moiety is then transferred to the epsilon-amino group of EF-P 'Lys-34'.</text>
</comment>
<comment type="catalytic activity">
    <reaction evidence="1">
        <text>D-beta-lysine + L-lysyl-[protein] + ATP = N(6)-((3R)-3,6-diaminohexanoyl)-L-lysyl-[protein] + AMP + diphosphate + H(+)</text>
        <dbReference type="Rhea" id="RHEA:83435"/>
        <dbReference type="Rhea" id="RHEA-COMP:9752"/>
        <dbReference type="Rhea" id="RHEA-COMP:20131"/>
        <dbReference type="ChEBI" id="CHEBI:15378"/>
        <dbReference type="ChEBI" id="CHEBI:29969"/>
        <dbReference type="ChEBI" id="CHEBI:30616"/>
        <dbReference type="ChEBI" id="CHEBI:33019"/>
        <dbReference type="ChEBI" id="CHEBI:84138"/>
        <dbReference type="ChEBI" id="CHEBI:156053"/>
        <dbReference type="ChEBI" id="CHEBI:456215"/>
    </reaction>
    <physiologicalReaction direction="left-to-right" evidence="1">
        <dbReference type="Rhea" id="RHEA:83436"/>
    </physiologicalReaction>
</comment>
<comment type="subunit">
    <text evidence="1">Homodimer.</text>
</comment>
<comment type="similarity">
    <text evidence="1">Belongs to the class-II aminoacyl-tRNA synthetase family. EpmA subfamily.</text>
</comment>
<evidence type="ECO:0000255" key="1">
    <source>
        <dbReference type="HAMAP-Rule" id="MF_00174"/>
    </source>
</evidence>
<organism>
    <name type="scientific">Escherichia coli (strain K12 / DH10B)</name>
    <dbReference type="NCBI Taxonomy" id="316385"/>
    <lineage>
        <taxon>Bacteria</taxon>
        <taxon>Pseudomonadati</taxon>
        <taxon>Pseudomonadota</taxon>
        <taxon>Gammaproteobacteria</taxon>
        <taxon>Enterobacterales</taxon>
        <taxon>Enterobacteriaceae</taxon>
        <taxon>Escherichia</taxon>
    </lineage>
</organism>
<protein>
    <recommendedName>
        <fullName evidence="1">Elongation factor P--(R)-beta-lysine ligase</fullName>
        <shortName evidence="1">EF-P--(R)-beta-lysine ligase</shortName>
        <ecNumber evidence="1">6.3.2.-</ecNumber>
    </recommendedName>
    <alternativeName>
        <fullName evidence="1">EF-P post-translational modification enzyme A</fullName>
    </alternativeName>
    <alternativeName>
        <fullName evidence="1">EF-P-lysine lysyltransferase</fullName>
    </alternativeName>
</protein>
<feature type="chain" id="PRO_1000097899" description="Elongation factor P--(R)-beta-lysine ligase">
    <location>
        <begin position="1"/>
        <end position="325"/>
    </location>
</feature>
<feature type="binding site" evidence="1">
    <location>
        <begin position="76"/>
        <end position="78"/>
    </location>
    <ligand>
        <name>substrate</name>
    </ligand>
</feature>
<feature type="binding site" evidence="1">
    <location>
        <begin position="100"/>
        <end position="102"/>
    </location>
    <ligand>
        <name>ATP</name>
        <dbReference type="ChEBI" id="CHEBI:30616"/>
    </ligand>
</feature>
<feature type="binding site" evidence="1">
    <location>
        <position position="109"/>
    </location>
    <ligand>
        <name>ATP</name>
        <dbReference type="ChEBI" id="CHEBI:30616"/>
    </ligand>
</feature>
<feature type="binding site" evidence="1">
    <location>
        <position position="118"/>
    </location>
    <ligand>
        <name>substrate</name>
    </ligand>
</feature>
<feature type="binding site" evidence="1">
    <location>
        <begin position="244"/>
        <end position="245"/>
    </location>
    <ligand>
        <name>ATP</name>
        <dbReference type="ChEBI" id="CHEBI:30616"/>
    </ligand>
</feature>
<feature type="binding site" evidence="1">
    <location>
        <position position="251"/>
    </location>
    <ligand>
        <name>substrate</name>
    </ligand>
</feature>
<feature type="binding site" evidence="1">
    <location>
        <position position="300"/>
    </location>
    <ligand>
        <name>ATP</name>
        <dbReference type="ChEBI" id="CHEBI:30616"/>
    </ligand>
</feature>
<proteinExistence type="inferred from homology"/>
<keyword id="KW-0067">ATP-binding</keyword>
<keyword id="KW-0436">Ligase</keyword>
<keyword id="KW-0547">Nucleotide-binding</keyword>
<sequence>MSETASWQPSASIPNLLKRAAIMAEIRRFFADRGVLEVETPCMSQATVTDIHLVPFETRFVGPGHSQGMNLWLMTSPEYHMKRLLVAGCGPVFQLCRSFRNEEMGRYHNPEFTMLEWYRPHYDMYRLMNEVDDLLQQVLDCPAAESLSYQQAFLRYLEIDPLSADKTQLREVAAKLDLSNVADTEEDRDTLLQLLFTFGVEPNIGKEKPTFVYHFPASQASLAQISTEDHRVAERFEVYYKGIELANGFHELTDAREQQQRFEQDNRKRAARGLPQHPIDQNLIEALKVGMPDCSGVALGVDRLVMLALGAETLAEVIAFSVDRA</sequence>
<name>EPMA_ECODH</name>
<reference key="1">
    <citation type="journal article" date="2008" name="J. Bacteriol.">
        <title>The complete genome sequence of Escherichia coli DH10B: insights into the biology of a laboratory workhorse.</title>
        <authorList>
            <person name="Durfee T."/>
            <person name="Nelson R."/>
            <person name="Baldwin S."/>
            <person name="Plunkett G. III"/>
            <person name="Burland V."/>
            <person name="Mau B."/>
            <person name="Petrosino J.F."/>
            <person name="Qin X."/>
            <person name="Muzny D.M."/>
            <person name="Ayele M."/>
            <person name="Gibbs R.A."/>
            <person name="Csorgo B."/>
            <person name="Posfai G."/>
            <person name="Weinstock G.M."/>
            <person name="Blattner F.R."/>
        </authorList>
    </citation>
    <scope>NUCLEOTIDE SEQUENCE [LARGE SCALE GENOMIC DNA]</scope>
    <source>
        <strain>K12 / DH10B</strain>
    </source>
</reference>
<accession>B1XDQ9</accession>